<comment type="function">
    <text evidence="1">Molecular chaperone. Has ATPase activity.</text>
</comment>
<comment type="subunit">
    <text evidence="1">Homodimer.</text>
</comment>
<comment type="subcellular location">
    <subcellularLocation>
        <location evidence="1">Cytoplasm</location>
    </subcellularLocation>
</comment>
<comment type="similarity">
    <text evidence="1">Belongs to the heat shock protein 90 family.</text>
</comment>
<reference key="1">
    <citation type="submission" date="2007-03" db="EMBL/GenBank/DDBJ databases">
        <title>Complete sequence of Prosthecochloris vibrioformis DSM 265.</title>
        <authorList>
            <consortium name="US DOE Joint Genome Institute"/>
            <person name="Copeland A."/>
            <person name="Lucas S."/>
            <person name="Lapidus A."/>
            <person name="Barry K."/>
            <person name="Detter J.C."/>
            <person name="Glavina del Rio T."/>
            <person name="Hammon N."/>
            <person name="Israni S."/>
            <person name="Pitluck S."/>
            <person name="Schmutz J."/>
            <person name="Larimer F."/>
            <person name="Land M."/>
            <person name="Hauser L."/>
            <person name="Mikhailova N."/>
            <person name="Li T."/>
            <person name="Overmann J."/>
            <person name="Schuster S.C."/>
            <person name="Bryant D.A."/>
            <person name="Richardson P."/>
        </authorList>
    </citation>
    <scope>NUCLEOTIDE SEQUENCE [LARGE SCALE GENOMIC DNA]</scope>
    <source>
        <strain>DSM 265 / 1930</strain>
    </source>
</reference>
<keyword id="KW-0067">ATP-binding</keyword>
<keyword id="KW-0143">Chaperone</keyword>
<keyword id="KW-0963">Cytoplasm</keyword>
<keyword id="KW-0547">Nucleotide-binding</keyword>
<keyword id="KW-0346">Stress response</keyword>
<gene>
    <name evidence="1" type="primary">htpG</name>
    <name type="ordered locus">Cvib_1024</name>
</gene>
<organism>
    <name type="scientific">Chlorobium phaeovibrioides (strain DSM 265 / 1930)</name>
    <name type="common">Prosthecochloris vibrioformis (strain DSM 265)</name>
    <dbReference type="NCBI Taxonomy" id="290318"/>
    <lineage>
        <taxon>Bacteria</taxon>
        <taxon>Pseudomonadati</taxon>
        <taxon>Chlorobiota</taxon>
        <taxon>Chlorobiia</taxon>
        <taxon>Chlorobiales</taxon>
        <taxon>Chlorobiaceae</taxon>
        <taxon>Chlorobium/Pelodictyon group</taxon>
        <taxon>Chlorobium</taxon>
    </lineage>
</organism>
<name>HTPG_CHLPM</name>
<sequence length="625" mass="70449">MSKKTNAPVQEFEYKAEMKQLLDLIVHSLYTHPEIFLRELVSNAADALSKARFSSLTDGGLMAAAGEDAIHITLDKEKLLFVIEDSGIGMSEDELIANLGTVAKSGTLGFMQSLQEQKKELDGNLIGQFGVGFYSVFMVTENVTVETRSAQEGSEGLRWQSSGQGTYTIEKVEKKERGTRISFTLKEEYKEFAEEYRVEQVIKKYSNFVDFPIYLGEKQLNSVTALWQRPKSELQEGDVHEFYKFISNDFEDPLDYLSVSVEGAVSFKALLFLPQNAPMELLYRQGELENKGPQLYVKKVMIQNECRDLLPEYLRFIAGVVDTEDLSLNVSREVVQSSPVMAKIRQILTTKILGWFEELAVEQPEKFKTFYKAFGPIVKIGLNTDFTNRDKLIELLRFESTKTGEGEFVTLKEYVARMGGEQKEIYYHSGAGRAQLLANPNLEYFQSRGIEVLLLSDPVDVFVIPSIHEYDSKQLKSIEKADIDFSKEKTEGEEPVAENLLVPLLAKFREALGEDIADVVESHRLVSSPVTIVGGKDAMDSQMERMMKMMQQEMPAAKKVLEVNPRHPIIRNLSGMMIANADNPLINSAIRQLYEGALLLEGDLSSTTGFVQRMNELIEAATLSR</sequence>
<protein>
    <recommendedName>
        <fullName evidence="1">Chaperone protein HtpG</fullName>
    </recommendedName>
    <alternativeName>
        <fullName evidence="1">Heat shock protein HtpG</fullName>
    </alternativeName>
    <alternativeName>
        <fullName evidence="1">High temperature protein G</fullName>
    </alternativeName>
</protein>
<feature type="chain" id="PRO_1000081521" description="Chaperone protein HtpG">
    <location>
        <begin position="1"/>
        <end position="625"/>
    </location>
</feature>
<feature type="region of interest" description="A; substrate-binding" evidence="1">
    <location>
        <begin position="1"/>
        <end position="332"/>
    </location>
</feature>
<feature type="region of interest" description="B" evidence="1">
    <location>
        <begin position="333"/>
        <end position="545"/>
    </location>
</feature>
<feature type="region of interest" description="C" evidence="1">
    <location>
        <begin position="546"/>
        <end position="625"/>
    </location>
</feature>
<evidence type="ECO:0000255" key="1">
    <source>
        <dbReference type="HAMAP-Rule" id="MF_00505"/>
    </source>
</evidence>
<proteinExistence type="inferred from homology"/>
<dbReference type="EMBL" id="CP000607">
    <property type="protein sequence ID" value="ABP37038.1"/>
    <property type="molecule type" value="Genomic_DNA"/>
</dbReference>
<dbReference type="SMR" id="A4SEX9"/>
<dbReference type="STRING" id="290318.Cvib_1024"/>
<dbReference type="KEGG" id="pvi:Cvib_1024"/>
<dbReference type="eggNOG" id="COG0326">
    <property type="taxonomic scope" value="Bacteria"/>
</dbReference>
<dbReference type="HOGENOM" id="CLU_006684_3_1_10"/>
<dbReference type="OrthoDB" id="9802640at2"/>
<dbReference type="GO" id="GO:0005737">
    <property type="term" value="C:cytoplasm"/>
    <property type="evidence" value="ECO:0007669"/>
    <property type="project" value="UniProtKB-SubCell"/>
</dbReference>
<dbReference type="GO" id="GO:0005524">
    <property type="term" value="F:ATP binding"/>
    <property type="evidence" value="ECO:0007669"/>
    <property type="project" value="UniProtKB-UniRule"/>
</dbReference>
<dbReference type="GO" id="GO:0016887">
    <property type="term" value="F:ATP hydrolysis activity"/>
    <property type="evidence" value="ECO:0007669"/>
    <property type="project" value="InterPro"/>
</dbReference>
<dbReference type="GO" id="GO:0140662">
    <property type="term" value="F:ATP-dependent protein folding chaperone"/>
    <property type="evidence" value="ECO:0007669"/>
    <property type="project" value="InterPro"/>
</dbReference>
<dbReference type="GO" id="GO:0051082">
    <property type="term" value="F:unfolded protein binding"/>
    <property type="evidence" value="ECO:0007669"/>
    <property type="project" value="UniProtKB-UniRule"/>
</dbReference>
<dbReference type="CDD" id="cd16927">
    <property type="entry name" value="HATPase_Hsp90-like"/>
    <property type="match status" value="1"/>
</dbReference>
<dbReference type="FunFam" id="3.30.565.10:FF:000009">
    <property type="entry name" value="Molecular chaperone HtpG"/>
    <property type="match status" value="1"/>
</dbReference>
<dbReference type="Gene3D" id="3.30.230.80">
    <property type="match status" value="1"/>
</dbReference>
<dbReference type="Gene3D" id="3.40.50.11260">
    <property type="match status" value="1"/>
</dbReference>
<dbReference type="Gene3D" id="1.20.120.790">
    <property type="entry name" value="Heat shock protein 90, C-terminal domain"/>
    <property type="match status" value="1"/>
</dbReference>
<dbReference type="Gene3D" id="3.30.565.10">
    <property type="entry name" value="Histidine kinase-like ATPase, C-terminal domain"/>
    <property type="match status" value="1"/>
</dbReference>
<dbReference type="HAMAP" id="MF_00505">
    <property type="entry name" value="HSP90"/>
    <property type="match status" value="1"/>
</dbReference>
<dbReference type="InterPro" id="IPR036890">
    <property type="entry name" value="HATPase_C_sf"/>
</dbReference>
<dbReference type="InterPro" id="IPR037196">
    <property type="entry name" value="HSP90_C"/>
</dbReference>
<dbReference type="InterPro" id="IPR001404">
    <property type="entry name" value="Hsp90_fam"/>
</dbReference>
<dbReference type="InterPro" id="IPR020575">
    <property type="entry name" value="Hsp90_N"/>
</dbReference>
<dbReference type="InterPro" id="IPR020568">
    <property type="entry name" value="Ribosomal_Su5_D2-typ_SF"/>
</dbReference>
<dbReference type="NCBIfam" id="NF003555">
    <property type="entry name" value="PRK05218.1"/>
    <property type="match status" value="1"/>
</dbReference>
<dbReference type="PANTHER" id="PTHR11528">
    <property type="entry name" value="HEAT SHOCK PROTEIN 90 FAMILY MEMBER"/>
    <property type="match status" value="1"/>
</dbReference>
<dbReference type="Pfam" id="PF13589">
    <property type="entry name" value="HATPase_c_3"/>
    <property type="match status" value="1"/>
</dbReference>
<dbReference type="Pfam" id="PF00183">
    <property type="entry name" value="HSP90"/>
    <property type="match status" value="1"/>
</dbReference>
<dbReference type="PIRSF" id="PIRSF002583">
    <property type="entry name" value="Hsp90"/>
    <property type="match status" value="1"/>
</dbReference>
<dbReference type="PRINTS" id="PR00775">
    <property type="entry name" value="HEATSHOCK90"/>
</dbReference>
<dbReference type="SMART" id="SM00387">
    <property type="entry name" value="HATPase_c"/>
    <property type="match status" value="1"/>
</dbReference>
<dbReference type="SUPFAM" id="SSF55874">
    <property type="entry name" value="ATPase domain of HSP90 chaperone/DNA topoisomerase II/histidine kinase"/>
    <property type="match status" value="1"/>
</dbReference>
<dbReference type="SUPFAM" id="SSF110942">
    <property type="entry name" value="HSP90 C-terminal domain"/>
    <property type="match status" value="1"/>
</dbReference>
<dbReference type="SUPFAM" id="SSF54211">
    <property type="entry name" value="Ribosomal protein S5 domain 2-like"/>
    <property type="match status" value="1"/>
</dbReference>
<accession>A4SEX9</accession>